<gene>
    <name evidence="1" type="primary">rpl23</name>
    <name type="ordered locus">PTO0642</name>
</gene>
<dbReference type="EMBL" id="AE017261">
    <property type="protein sequence ID" value="AAT43227.1"/>
    <property type="molecule type" value="Genomic_DNA"/>
</dbReference>
<dbReference type="RefSeq" id="WP_011177443.1">
    <property type="nucleotide sequence ID" value="NC_005877.1"/>
</dbReference>
<dbReference type="SMR" id="Q6L1C5"/>
<dbReference type="FunCoup" id="Q6L1C5">
    <property type="interactions" value="147"/>
</dbReference>
<dbReference type="STRING" id="263820.PTO0642"/>
<dbReference type="PaxDb" id="263820-PTO0642"/>
<dbReference type="GeneID" id="2844575"/>
<dbReference type="KEGG" id="pto:PTO0642"/>
<dbReference type="eggNOG" id="arCOG04072">
    <property type="taxonomic scope" value="Archaea"/>
</dbReference>
<dbReference type="HOGENOM" id="CLU_037562_4_2_2"/>
<dbReference type="InParanoid" id="Q6L1C5"/>
<dbReference type="OrthoDB" id="7751at2157"/>
<dbReference type="Proteomes" id="UP000000438">
    <property type="component" value="Chromosome"/>
</dbReference>
<dbReference type="GO" id="GO:1990904">
    <property type="term" value="C:ribonucleoprotein complex"/>
    <property type="evidence" value="ECO:0007669"/>
    <property type="project" value="UniProtKB-KW"/>
</dbReference>
<dbReference type="GO" id="GO:0005840">
    <property type="term" value="C:ribosome"/>
    <property type="evidence" value="ECO:0007669"/>
    <property type="project" value="UniProtKB-KW"/>
</dbReference>
<dbReference type="GO" id="GO:0019843">
    <property type="term" value="F:rRNA binding"/>
    <property type="evidence" value="ECO:0007669"/>
    <property type="project" value="UniProtKB-UniRule"/>
</dbReference>
<dbReference type="GO" id="GO:0003735">
    <property type="term" value="F:structural constituent of ribosome"/>
    <property type="evidence" value="ECO:0007669"/>
    <property type="project" value="InterPro"/>
</dbReference>
<dbReference type="GO" id="GO:0006412">
    <property type="term" value="P:translation"/>
    <property type="evidence" value="ECO:0007669"/>
    <property type="project" value="UniProtKB-UniRule"/>
</dbReference>
<dbReference type="Gene3D" id="3.30.70.330">
    <property type="match status" value="1"/>
</dbReference>
<dbReference type="HAMAP" id="MF_01369_A">
    <property type="entry name" value="Ribosomal_uL23_A"/>
    <property type="match status" value="1"/>
</dbReference>
<dbReference type="HAMAP" id="MF_01369_B">
    <property type="entry name" value="Ribosomal_uL23_B"/>
    <property type="match status" value="1"/>
</dbReference>
<dbReference type="InterPro" id="IPR012677">
    <property type="entry name" value="Nucleotide-bd_a/b_plait_sf"/>
</dbReference>
<dbReference type="InterPro" id="IPR019985">
    <property type="entry name" value="Ribosomal_uL23"/>
</dbReference>
<dbReference type="InterPro" id="IPR013025">
    <property type="entry name" value="Ribosomal_uL23-like"/>
</dbReference>
<dbReference type="InterPro" id="IPR012678">
    <property type="entry name" value="Ribosomal_uL23/eL15/eS24_sf"/>
</dbReference>
<dbReference type="InterPro" id="IPR001014">
    <property type="entry name" value="Ribosomal_uL23_CS"/>
</dbReference>
<dbReference type="NCBIfam" id="NF011118">
    <property type="entry name" value="PRK14548.1"/>
    <property type="match status" value="1"/>
</dbReference>
<dbReference type="NCBIfam" id="TIGR03636">
    <property type="entry name" value="uL23_arch"/>
    <property type="match status" value="1"/>
</dbReference>
<dbReference type="PANTHER" id="PTHR11620">
    <property type="entry name" value="60S RIBOSOMAL PROTEIN L23A"/>
    <property type="match status" value="1"/>
</dbReference>
<dbReference type="Pfam" id="PF00276">
    <property type="entry name" value="Ribosomal_L23"/>
    <property type="match status" value="1"/>
</dbReference>
<dbReference type="SUPFAM" id="SSF54189">
    <property type="entry name" value="Ribosomal proteins S24e, L23 and L15e"/>
    <property type="match status" value="1"/>
</dbReference>
<dbReference type="PROSITE" id="PS00050">
    <property type="entry name" value="RIBOSOMAL_L23"/>
    <property type="match status" value="1"/>
</dbReference>
<reference key="1">
    <citation type="journal article" date="2004" name="Proc. Natl. Acad. Sci. U.S.A.">
        <title>Genome sequence of Picrophilus torridus and its implications for life around pH 0.</title>
        <authorList>
            <person name="Fuetterer O."/>
            <person name="Angelov A."/>
            <person name="Liesegang H."/>
            <person name="Gottschalk G."/>
            <person name="Schleper C."/>
            <person name="Schepers B."/>
            <person name="Dock C."/>
            <person name="Antranikian G."/>
            <person name="Liebl W."/>
        </authorList>
    </citation>
    <scope>NUCLEOTIDE SEQUENCE [LARGE SCALE GENOMIC DNA]</scope>
    <source>
        <strain>ATCC 700027 / DSM 9790 / JCM 10055 / NBRC 100828 / KAW 2/3</strain>
    </source>
</reference>
<evidence type="ECO:0000255" key="1">
    <source>
        <dbReference type="HAMAP-Rule" id="MF_01369"/>
    </source>
</evidence>
<evidence type="ECO:0000305" key="2"/>
<accession>Q6L1C5</accession>
<sequence length="82" mass="9224">MDYIISPIVTEKTTLMMEKENKITFLVNRKATKEAIKNEVEARFNVKVAKVNMMIAKNGKKAIVTLAKDFSAEEVGGRMGIF</sequence>
<organism>
    <name type="scientific">Picrophilus torridus (strain ATCC 700027 / DSM 9790 / JCM 10055 / NBRC 100828 / KAW 2/3)</name>
    <dbReference type="NCBI Taxonomy" id="1122961"/>
    <lineage>
        <taxon>Archaea</taxon>
        <taxon>Methanobacteriati</taxon>
        <taxon>Thermoplasmatota</taxon>
        <taxon>Thermoplasmata</taxon>
        <taxon>Thermoplasmatales</taxon>
        <taxon>Picrophilaceae</taxon>
        <taxon>Picrophilus</taxon>
    </lineage>
</organism>
<proteinExistence type="inferred from homology"/>
<feature type="chain" id="PRO_0000272951" description="Large ribosomal subunit protein uL23">
    <location>
        <begin position="1"/>
        <end position="82"/>
    </location>
</feature>
<protein>
    <recommendedName>
        <fullName evidence="1">Large ribosomal subunit protein uL23</fullName>
    </recommendedName>
    <alternativeName>
        <fullName evidence="2">50S ribosomal protein L23</fullName>
    </alternativeName>
</protein>
<comment type="function">
    <text evidence="1">Binds to 23S rRNA. One of the proteins that surrounds the polypeptide exit tunnel on the outside of the ribosome.</text>
</comment>
<comment type="subunit">
    <text evidence="1">Part of the 50S ribosomal subunit. Contacts protein L29.</text>
</comment>
<comment type="similarity">
    <text evidence="1">Belongs to the universal ribosomal protein uL23 family.</text>
</comment>
<keyword id="KW-0687">Ribonucleoprotein</keyword>
<keyword id="KW-0689">Ribosomal protein</keyword>
<keyword id="KW-0694">RNA-binding</keyword>
<keyword id="KW-0699">rRNA-binding</keyword>
<name>RL23_PICTO</name>